<comment type="function">
    <text evidence="2 4">Catalyzes the transfer of a methyl group from AdoMet to trivalent arsenicals producing methylated and dimethylated arsenicals (PubMed:16407288, PubMed:25997655). It methylates arsenite to form methylarsonate, Me-AsO(3)H(2), which is reduced by methylarsonate reductase to methylarsonite, Me-As(OH)2 (PubMed:16407288, PubMed:25997655). Methylarsonite is also a substrate and it is converted into the much less toxic compound dimethylarsinate (cacodylate), Me(2)As(O)-OH (PubMed:16407288, PubMed:25997655).</text>
</comment>
<comment type="catalytic activity">
    <reaction evidence="2 4">
        <text>arsenic triglutathione + [thioredoxin]-dithiol + S-adenosyl-L-methionine + 2 H2O = methylarsonous acid + [thioredoxin]-disulfide + 3 glutathione + S-adenosyl-L-homocysteine + H(+)</text>
        <dbReference type="Rhea" id="RHEA:69460"/>
        <dbReference type="Rhea" id="RHEA-COMP:10698"/>
        <dbReference type="Rhea" id="RHEA-COMP:10700"/>
        <dbReference type="ChEBI" id="CHEBI:15377"/>
        <dbReference type="ChEBI" id="CHEBI:15378"/>
        <dbReference type="ChEBI" id="CHEBI:17826"/>
        <dbReference type="ChEBI" id="CHEBI:29950"/>
        <dbReference type="ChEBI" id="CHEBI:50058"/>
        <dbReference type="ChEBI" id="CHEBI:57856"/>
        <dbReference type="ChEBI" id="CHEBI:57925"/>
        <dbReference type="ChEBI" id="CHEBI:59789"/>
        <dbReference type="ChEBI" id="CHEBI:183640"/>
        <dbReference type="EC" id="2.1.1.137"/>
    </reaction>
</comment>
<comment type="catalytic activity">
    <reaction evidence="2 4">
        <text>arsenic triglutathione + 2 [thioredoxin]-dithiol + 2 S-adenosyl-L-methionine + H2O = dimethylarsinous acid + 2 [thioredoxin]-disulfide + 3 glutathione + 2 S-adenosyl-L-homocysteine + 2 H(+)</text>
        <dbReference type="Rhea" id="RHEA:69464"/>
        <dbReference type="Rhea" id="RHEA-COMP:10698"/>
        <dbReference type="Rhea" id="RHEA-COMP:10700"/>
        <dbReference type="ChEBI" id="CHEBI:15377"/>
        <dbReference type="ChEBI" id="CHEBI:15378"/>
        <dbReference type="ChEBI" id="CHEBI:23808"/>
        <dbReference type="ChEBI" id="CHEBI:29950"/>
        <dbReference type="ChEBI" id="CHEBI:50058"/>
        <dbReference type="ChEBI" id="CHEBI:57856"/>
        <dbReference type="ChEBI" id="CHEBI:57925"/>
        <dbReference type="ChEBI" id="CHEBI:59789"/>
        <dbReference type="ChEBI" id="CHEBI:183640"/>
        <dbReference type="EC" id="2.1.1.137"/>
    </reaction>
</comment>
<comment type="catalytic activity">
    <reaction evidence="2 4">
        <text>arsenic triglutathione + 3 [thioredoxin]-dithiol + 3 S-adenosyl-L-methionine = trimethylarsine + 3 [thioredoxin]-disulfide + 3 glutathione + 3 S-adenosyl-L-homocysteine + 3 H(+)</text>
        <dbReference type="Rhea" id="RHEA:69432"/>
        <dbReference type="Rhea" id="RHEA-COMP:10698"/>
        <dbReference type="Rhea" id="RHEA-COMP:10700"/>
        <dbReference type="ChEBI" id="CHEBI:15378"/>
        <dbReference type="ChEBI" id="CHEBI:27130"/>
        <dbReference type="ChEBI" id="CHEBI:29950"/>
        <dbReference type="ChEBI" id="CHEBI:50058"/>
        <dbReference type="ChEBI" id="CHEBI:57856"/>
        <dbReference type="ChEBI" id="CHEBI:57925"/>
        <dbReference type="ChEBI" id="CHEBI:59789"/>
        <dbReference type="ChEBI" id="CHEBI:183640"/>
        <dbReference type="EC" id="2.1.1.137"/>
    </reaction>
</comment>
<comment type="biophysicochemical properties">
    <kinetics>
        <KM evidence="2">4.6 uM for sodium arsenite</KM>
        <KM evidence="2">11.8 uM for AdoMet</KM>
    </kinetics>
</comment>
<comment type="subcellular location">
    <subcellularLocation>
        <location evidence="1">Cytoplasm</location>
        <location evidence="1">Cytosol</location>
    </subcellularLocation>
</comment>
<comment type="alternative products">
    <event type="alternative splicing"/>
    <isoform>
        <id>Q9HBK9-1</id>
        <name>1</name>
        <sequence type="displayed"/>
    </isoform>
    <isoform>
        <id>Q9HBK9-2</id>
        <name>2</name>
        <name>31.1 kDa</name>
        <name>delta4,5</name>
        <sequence type="described" ref="VSP_053494"/>
    </isoform>
    <text>An isoform missing exon 3 is produced with a premature stop codon at AA 23 and is targeted to nonsense-mediated mRNA decay (NMD).</text>
</comment>
<comment type="miscellaneous">
    <molecule>Isoform 2</molecule>
    <text evidence="5">Devoid of methyltransferase activity.</text>
</comment>
<comment type="similarity">
    <text evidence="5">Belongs to the methyltransferase superfamily. Arsenite methyltransferase family.</text>
</comment>
<comment type="sequence caution" evidence="5">
    <conflict type="frameshift">
        <sequence resource="EMBL-CDS" id="AAG09731"/>
    </conflict>
</comment>
<evidence type="ECO:0000250" key="1">
    <source>
        <dbReference type="UniProtKB" id="Q8VHT6"/>
    </source>
</evidence>
<evidence type="ECO:0000269" key="2">
    <source>
    </source>
</evidence>
<evidence type="ECO:0000269" key="3">
    <source>
    </source>
</evidence>
<evidence type="ECO:0000269" key="4">
    <source>
    </source>
</evidence>
<evidence type="ECO:0000305" key="5"/>
<evidence type="ECO:0007744" key="6">
    <source>
    </source>
</evidence>
<sequence length="375" mass="41748">MAALRDAEIQKDVQTYYGQVLKRSADLQTNGCVTTARPVPKHIREALQNVHEEVALRYYGCGLVIPEHLENCWILDLGSGSGRDCYVLSQLVGEKGHVTGIDMTKGQVEVAEKYLDYHMEKYGFQASNVTFIHGYIEKLGEAGIKNESHDIVVSNCVINLVPDKQQVLQEAYRVLKHGGELYFSDVYTSLELPEEIRTHKVLWGECLGGALYWKELAVLAQKIGFCPPRLVTANLITIQNKELERVIGDCRFVSATFRLFKHSKTGPTKRCQVIYNGGITGHEKELMFDANFTFKEGEIVEVDEETAAILKNSRFAQDFLIRPIGEKLPTSGGCSALELKDIITDPFKLAEESDSMKSRCVPDAAGGCCGTKKSC</sequence>
<dbReference type="EC" id="2.1.1.137" evidence="2 4"/>
<dbReference type="EMBL" id="AF226730">
    <property type="protein sequence ID" value="AAG09731.1"/>
    <property type="status" value="ALT_FRAME"/>
    <property type="molecule type" value="mRNA"/>
</dbReference>
<dbReference type="EMBL" id="AY817668">
    <property type="protein sequence ID" value="AAV68045.1"/>
    <property type="molecule type" value="Genomic_DNA"/>
</dbReference>
<dbReference type="EMBL" id="AL358790">
    <property type="status" value="NOT_ANNOTATED_CDS"/>
    <property type="molecule type" value="Genomic_DNA"/>
</dbReference>
<dbReference type="EMBL" id="CH471066">
    <property type="protein sequence ID" value="EAW49668.1"/>
    <property type="molecule type" value="Genomic_DNA"/>
</dbReference>
<dbReference type="EMBL" id="BC119637">
    <property type="protein sequence ID" value="AAI19638.1"/>
    <property type="molecule type" value="mRNA"/>
</dbReference>
<dbReference type="EMBL" id="BC119638">
    <property type="protein sequence ID" value="AAI19639.2"/>
    <property type="molecule type" value="mRNA"/>
</dbReference>
<dbReference type="CCDS" id="CCDS41567.1">
    <molecule id="Q9HBK9-1"/>
</dbReference>
<dbReference type="RefSeq" id="NP_065733.2">
    <molecule id="Q9HBK9-1"/>
    <property type="nucleotide sequence ID" value="NM_020682.4"/>
</dbReference>
<dbReference type="PDB" id="8XT7">
    <property type="method" value="X-ray"/>
    <property type="resolution" value="2.59 A"/>
    <property type="chains" value="A/B/C/D=38-358"/>
</dbReference>
<dbReference type="PDBsum" id="8XT7"/>
<dbReference type="SMR" id="Q9HBK9"/>
<dbReference type="BioGRID" id="121513">
    <property type="interactions" value="11"/>
</dbReference>
<dbReference type="FunCoup" id="Q9HBK9">
    <property type="interactions" value="286"/>
</dbReference>
<dbReference type="IntAct" id="Q9HBK9">
    <property type="interactions" value="4"/>
</dbReference>
<dbReference type="STRING" id="9606.ENSP00000358896"/>
<dbReference type="BindingDB" id="Q9HBK9"/>
<dbReference type="ChEMBL" id="CHEMBL4295950"/>
<dbReference type="DrugBank" id="DB00118">
    <property type="generic name" value="Ademetionine"/>
</dbReference>
<dbReference type="GlyGen" id="Q9HBK9">
    <property type="glycosylation" value="1 site, 1 O-linked glycan (1 site)"/>
</dbReference>
<dbReference type="iPTMnet" id="Q9HBK9"/>
<dbReference type="PhosphoSitePlus" id="Q9HBK9"/>
<dbReference type="BioMuta" id="AS3MT"/>
<dbReference type="DMDM" id="209572762"/>
<dbReference type="jPOST" id="Q9HBK9"/>
<dbReference type="MassIVE" id="Q9HBK9"/>
<dbReference type="PaxDb" id="9606-ENSP00000358896"/>
<dbReference type="PeptideAtlas" id="Q9HBK9"/>
<dbReference type="ProteomicsDB" id="81567">
    <molecule id="Q9HBK9-1"/>
</dbReference>
<dbReference type="Pumba" id="Q9HBK9"/>
<dbReference type="Antibodypedia" id="2804">
    <property type="antibodies" value="137 antibodies from 31 providers"/>
</dbReference>
<dbReference type="DNASU" id="57412"/>
<dbReference type="Ensembl" id="ENST00000369880.8">
    <molecule id="Q9HBK9-1"/>
    <property type="protein sequence ID" value="ENSP00000358896.3"/>
    <property type="gene ID" value="ENSG00000214435.9"/>
</dbReference>
<dbReference type="GeneID" id="57412"/>
<dbReference type="KEGG" id="hsa:57412"/>
<dbReference type="MANE-Select" id="ENST00000369880.8">
    <property type="protein sequence ID" value="ENSP00000358896.3"/>
    <property type="RefSeq nucleotide sequence ID" value="NM_020682.4"/>
    <property type="RefSeq protein sequence ID" value="NP_065733.2"/>
</dbReference>
<dbReference type="UCSC" id="uc001kwk.4">
    <molecule id="Q9HBK9-1"/>
    <property type="organism name" value="human"/>
</dbReference>
<dbReference type="AGR" id="HGNC:17452"/>
<dbReference type="CTD" id="57412"/>
<dbReference type="DisGeNET" id="57412"/>
<dbReference type="GeneCards" id="AS3MT"/>
<dbReference type="HGNC" id="HGNC:17452">
    <property type="gene designation" value="AS3MT"/>
</dbReference>
<dbReference type="HPA" id="ENSG00000214435">
    <property type="expression patterns" value="Tissue enhanced (adrenal)"/>
</dbReference>
<dbReference type="MIM" id="611806">
    <property type="type" value="gene"/>
</dbReference>
<dbReference type="neXtProt" id="NX_Q9HBK9"/>
<dbReference type="OpenTargets" id="ENSG00000214435"/>
<dbReference type="PharmGKB" id="PA134896392"/>
<dbReference type="VEuPathDB" id="HostDB:ENSG00000214435"/>
<dbReference type="eggNOG" id="ENOG502QQD6">
    <property type="taxonomic scope" value="Eukaryota"/>
</dbReference>
<dbReference type="GeneTree" id="ENSGT00390000001742"/>
<dbReference type="InParanoid" id="Q9HBK9"/>
<dbReference type="OMA" id="EPACEDY"/>
<dbReference type="OrthoDB" id="8300214at2759"/>
<dbReference type="PAN-GO" id="Q9HBK9">
    <property type="GO annotations" value="5 GO annotations based on evolutionary models"/>
</dbReference>
<dbReference type="PhylomeDB" id="Q9HBK9"/>
<dbReference type="TreeFam" id="TF343797"/>
<dbReference type="BioCyc" id="MetaCyc:HS01822-MONOMER"/>
<dbReference type="BRENDA" id="2.1.1.137">
    <property type="organism ID" value="2681"/>
</dbReference>
<dbReference type="PathwayCommons" id="Q9HBK9"/>
<dbReference type="Reactome" id="R-HSA-156581">
    <property type="pathway name" value="Methylation"/>
</dbReference>
<dbReference type="SABIO-RK" id="Q9HBK9"/>
<dbReference type="SignaLink" id="Q9HBK9"/>
<dbReference type="BioGRID-ORCS" id="57412">
    <property type="hits" value="8 hits in 1159 CRISPR screens"/>
</dbReference>
<dbReference type="GeneWiki" id="AS3MT"/>
<dbReference type="GenomeRNAi" id="57412"/>
<dbReference type="Pharos" id="Q9HBK9">
    <property type="development level" value="Tbio"/>
</dbReference>
<dbReference type="PRO" id="PR:Q9HBK9"/>
<dbReference type="Proteomes" id="UP000005640">
    <property type="component" value="Chromosome 10"/>
</dbReference>
<dbReference type="RNAct" id="Q9HBK9">
    <property type="molecule type" value="protein"/>
</dbReference>
<dbReference type="Bgee" id="ENSG00000214435">
    <property type="expression patterns" value="Expressed in right adrenal gland and 99 other cell types or tissues"/>
</dbReference>
<dbReference type="ExpressionAtlas" id="Q9HBK9">
    <property type="expression patterns" value="baseline and differential"/>
</dbReference>
<dbReference type="GO" id="GO:0005829">
    <property type="term" value="C:cytosol"/>
    <property type="evidence" value="ECO:0000250"/>
    <property type="project" value="UniProtKB"/>
</dbReference>
<dbReference type="GO" id="GO:0030791">
    <property type="term" value="F:arsenite methyltransferase activity"/>
    <property type="evidence" value="ECO:0000314"/>
    <property type="project" value="UniProtKB"/>
</dbReference>
<dbReference type="GO" id="GO:0018872">
    <property type="term" value="P:arsonoacetate metabolic process"/>
    <property type="evidence" value="ECO:0000314"/>
    <property type="project" value="UniProtKB"/>
</dbReference>
<dbReference type="GO" id="GO:0032259">
    <property type="term" value="P:methylation"/>
    <property type="evidence" value="ECO:0000314"/>
    <property type="project" value="UniProtKB"/>
</dbReference>
<dbReference type="GO" id="GO:0009404">
    <property type="term" value="P:toxin metabolic process"/>
    <property type="evidence" value="ECO:0000314"/>
    <property type="project" value="UniProtKB"/>
</dbReference>
<dbReference type="CDD" id="cd02440">
    <property type="entry name" value="AdoMet_MTases"/>
    <property type="match status" value="1"/>
</dbReference>
<dbReference type="FunFam" id="3.40.5.100:FF:000001">
    <property type="entry name" value="Arsenite methyltransferase"/>
    <property type="match status" value="1"/>
</dbReference>
<dbReference type="FunFam" id="3.40.50.150:FF:000306">
    <property type="entry name" value="Arsenite methyltransferase"/>
    <property type="match status" value="1"/>
</dbReference>
<dbReference type="Gene3D" id="3.40.5.100">
    <property type="match status" value="1"/>
</dbReference>
<dbReference type="Gene3D" id="3.40.50.150">
    <property type="entry name" value="Vaccinia Virus protein VP39"/>
    <property type="match status" value="1"/>
</dbReference>
<dbReference type="InterPro" id="IPR026669">
    <property type="entry name" value="Arsenite_MeTrfase-like"/>
</dbReference>
<dbReference type="InterPro" id="IPR025714">
    <property type="entry name" value="Methyltranfer_dom"/>
</dbReference>
<dbReference type="InterPro" id="IPR029063">
    <property type="entry name" value="SAM-dependent_MTases_sf"/>
</dbReference>
<dbReference type="PANTHER" id="PTHR43675">
    <property type="entry name" value="ARSENITE METHYLTRANSFERASE"/>
    <property type="match status" value="1"/>
</dbReference>
<dbReference type="PANTHER" id="PTHR43675:SF8">
    <property type="entry name" value="ARSENITE METHYLTRANSFERASE"/>
    <property type="match status" value="1"/>
</dbReference>
<dbReference type="Pfam" id="PF13847">
    <property type="entry name" value="Methyltransf_31"/>
    <property type="match status" value="1"/>
</dbReference>
<dbReference type="SUPFAM" id="SSF53335">
    <property type="entry name" value="S-adenosyl-L-methionine-dependent methyltransferases"/>
    <property type="match status" value="1"/>
</dbReference>
<keyword id="KW-0002">3D-structure</keyword>
<keyword id="KW-0025">Alternative splicing</keyword>
<keyword id="KW-0963">Cytoplasm</keyword>
<keyword id="KW-0489">Methyltransferase</keyword>
<keyword id="KW-0597">Phosphoprotein</keyword>
<keyword id="KW-1267">Proteomics identification</keyword>
<keyword id="KW-1185">Reference proteome</keyword>
<keyword id="KW-0949">S-adenosyl-L-methionine</keyword>
<keyword id="KW-0808">Transferase</keyword>
<reference key="1">
    <citation type="journal article" date="2006" name="J. Biol. Chem.">
        <title>Human arsenic methyltransferase (AS3MT) pharmacogenetics: gene resequencing and functional genomics studies.</title>
        <authorList>
            <person name="Wood T.C."/>
            <person name="Salavagionne O.E."/>
            <person name="Mukherjee B."/>
            <person name="Wang L."/>
            <person name="Klumpp A.F."/>
            <person name="Thomae B.A."/>
            <person name="Eckloff B.W."/>
            <person name="Schaid D.J."/>
            <person name="Wieben E.D."/>
            <person name="Weinshilboum R.M."/>
        </authorList>
    </citation>
    <scope>NUCLEOTIDE SEQUENCE [MRNA] (ISOFORM 1)</scope>
    <scope>CATALYTIC ACTIVITY</scope>
    <scope>BIOPHYSICOCHEMICAL PROPERTIES</scope>
    <scope>VARIANTS TRP-173; THR-287 AND ILE-306</scope>
</reference>
<reference key="2">
    <citation type="submission" date="2000-01" db="EMBL/GenBank/DDBJ databases">
        <authorList>
            <person name="Xiao H."/>
            <person name="Song H."/>
            <person name="Gao G."/>
            <person name="Ren S."/>
            <person name="Chen Z."/>
            <person name="Han Z."/>
        </authorList>
    </citation>
    <scope>NUCLEOTIDE SEQUENCE [MRNA] (ISOFORM 1)</scope>
    <source>
        <tissue>Adrenal tumor</tissue>
    </source>
</reference>
<reference key="3">
    <citation type="submission" date="2004-12" db="EMBL/GenBank/DDBJ databases">
        <authorList>
            <person name="Yu L."/>
            <person name="Kalla K."/>
            <person name="Guthrie E."/>
            <person name="Vidrine A."/>
            <person name="Klimecki W.T."/>
        </authorList>
    </citation>
    <scope>NUCLEOTIDE SEQUENCE [GENOMIC DNA]</scope>
</reference>
<reference key="4">
    <citation type="journal article" date="2004" name="Nature">
        <title>The DNA sequence and comparative analysis of human chromosome 10.</title>
        <authorList>
            <person name="Deloukas P."/>
            <person name="Earthrowl M.E."/>
            <person name="Grafham D.V."/>
            <person name="Rubenfield M."/>
            <person name="French L."/>
            <person name="Steward C.A."/>
            <person name="Sims S.K."/>
            <person name="Jones M.C."/>
            <person name="Searle S."/>
            <person name="Scott C."/>
            <person name="Howe K."/>
            <person name="Hunt S.E."/>
            <person name="Andrews T.D."/>
            <person name="Gilbert J.G.R."/>
            <person name="Swarbreck D."/>
            <person name="Ashurst J.L."/>
            <person name="Taylor A."/>
            <person name="Battles J."/>
            <person name="Bird C.P."/>
            <person name="Ainscough R."/>
            <person name="Almeida J.P."/>
            <person name="Ashwell R.I.S."/>
            <person name="Ambrose K.D."/>
            <person name="Babbage A.K."/>
            <person name="Bagguley C.L."/>
            <person name="Bailey J."/>
            <person name="Banerjee R."/>
            <person name="Bates K."/>
            <person name="Beasley H."/>
            <person name="Bray-Allen S."/>
            <person name="Brown A.J."/>
            <person name="Brown J.Y."/>
            <person name="Burford D.C."/>
            <person name="Burrill W."/>
            <person name="Burton J."/>
            <person name="Cahill P."/>
            <person name="Camire D."/>
            <person name="Carter N.P."/>
            <person name="Chapman J.C."/>
            <person name="Clark S.Y."/>
            <person name="Clarke G."/>
            <person name="Clee C.M."/>
            <person name="Clegg S."/>
            <person name="Corby N."/>
            <person name="Coulson A."/>
            <person name="Dhami P."/>
            <person name="Dutta I."/>
            <person name="Dunn M."/>
            <person name="Faulkner L."/>
            <person name="Frankish A."/>
            <person name="Frankland J.A."/>
            <person name="Garner P."/>
            <person name="Garnett J."/>
            <person name="Gribble S."/>
            <person name="Griffiths C."/>
            <person name="Grocock R."/>
            <person name="Gustafson E."/>
            <person name="Hammond S."/>
            <person name="Harley J.L."/>
            <person name="Hart E."/>
            <person name="Heath P.D."/>
            <person name="Ho T.P."/>
            <person name="Hopkins B."/>
            <person name="Horne J."/>
            <person name="Howden P.J."/>
            <person name="Huckle E."/>
            <person name="Hynds C."/>
            <person name="Johnson C."/>
            <person name="Johnson D."/>
            <person name="Kana A."/>
            <person name="Kay M."/>
            <person name="Kimberley A.M."/>
            <person name="Kershaw J.K."/>
            <person name="Kokkinaki M."/>
            <person name="Laird G.K."/>
            <person name="Lawlor S."/>
            <person name="Lee H.M."/>
            <person name="Leongamornlert D.A."/>
            <person name="Laird G."/>
            <person name="Lloyd C."/>
            <person name="Lloyd D.M."/>
            <person name="Loveland J."/>
            <person name="Lovell J."/>
            <person name="McLaren S."/>
            <person name="McLay K.E."/>
            <person name="McMurray A."/>
            <person name="Mashreghi-Mohammadi M."/>
            <person name="Matthews L."/>
            <person name="Milne S."/>
            <person name="Nickerson T."/>
            <person name="Nguyen M."/>
            <person name="Overton-Larty E."/>
            <person name="Palmer S.A."/>
            <person name="Pearce A.V."/>
            <person name="Peck A.I."/>
            <person name="Pelan S."/>
            <person name="Phillimore B."/>
            <person name="Porter K."/>
            <person name="Rice C.M."/>
            <person name="Rogosin A."/>
            <person name="Ross M.T."/>
            <person name="Sarafidou T."/>
            <person name="Sehra H.K."/>
            <person name="Shownkeen R."/>
            <person name="Skuce C.D."/>
            <person name="Smith M."/>
            <person name="Standring L."/>
            <person name="Sycamore N."/>
            <person name="Tester J."/>
            <person name="Thorpe A."/>
            <person name="Torcasso W."/>
            <person name="Tracey A."/>
            <person name="Tromans A."/>
            <person name="Tsolas J."/>
            <person name="Wall M."/>
            <person name="Walsh J."/>
            <person name="Wang H."/>
            <person name="Weinstock K."/>
            <person name="West A.P."/>
            <person name="Willey D.L."/>
            <person name="Whitehead S.L."/>
            <person name="Wilming L."/>
            <person name="Wray P.W."/>
            <person name="Young L."/>
            <person name="Chen Y."/>
            <person name="Lovering R.C."/>
            <person name="Moschonas N.K."/>
            <person name="Siebert R."/>
            <person name="Fechtel K."/>
            <person name="Bentley D."/>
            <person name="Durbin R.M."/>
            <person name="Hubbard T."/>
            <person name="Doucette-Stamm L."/>
            <person name="Beck S."/>
            <person name="Smith D.R."/>
            <person name="Rogers J."/>
        </authorList>
    </citation>
    <scope>NUCLEOTIDE SEQUENCE [LARGE SCALE GENOMIC DNA]</scope>
</reference>
<reference key="5">
    <citation type="submission" date="2005-09" db="EMBL/GenBank/DDBJ databases">
        <authorList>
            <person name="Mural R.J."/>
            <person name="Istrail S."/>
            <person name="Sutton G.G."/>
            <person name="Florea L."/>
            <person name="Halpern A.L."/>
            <person name="Mobarry C.M."/>
            <person name="Lippert R."/>
            <person name="Walenz B."/>
            <person name="Shatkay H."/>
            <person name="Dew I."/>
            <person name="Miller J.R."/>
            <person name="Flanigan M.J."/>
            <person name="Edwards N.J."/>
            <person name="Bolanos R."/>
            <person name="Fasulo D."/>
            <person name="Halldorsson B.V."/>
            <person name="Hannenhalli S."/>
            <person name="Turner R."/>
            <person name="Yooseph S."/>
            <person name="Lu F."/>
            <person name="Nusskern D.R."/>
            <person name="Shue B.C."/>
            <person name="Zheng X.H."/>
            <person name="Zhong F."/>
            <person name="Delcher A.L."/>
            <person name="Huson D.H."/>
            <person name="Kravitz S.A."/>
            <person name="Mouchard L."/>
            <person name="Reinert K."/>
            <person name="Remington K.A."/>
            <person name="Clark A.G."/>
            <person name="Waterman M.S."/>
            <person name="Eichler E.E."/>
            <person name="Adams M.D."/>
            <person name="Hunkapiller M.W."/>
            <person name="Myers E.W."/>
            <person name="Venter J.C."/>
        </authorList>
    </citation>
    <scope>NUCLEOTIDE SEQUENCE [LARGE SCALE GENOMIC DNA]</scope>
</reference>
<reference key="6">
    <citation type="journal article" date="2004" name="Genome Res.">
        <title>The status, quality, and expansion of the NIH full-length cDNA project: the Mammalian Gene Collection (MGC).</title>
        <authorList>
            <consortium name="The MGC Project Team"/>
        </authorList>
    </citation>
    <scope>NUCLEOTIDE SEQUENCE [LARGE SCALE MRNA] OF 1-367 (ISOFORM 1)</scope>
</reference>
<reference key="7">
    <citation type="journal article" date="2011" name="BMC Syst. Biol.">
        <title>Initial characterization of the human central proteome.</title>
        <authorList>
            <person name="Burkard T.R."/>
            <person name="Planyavsky M."/>
            <person name="Kaupe I."/>
            <person name="Breitwieser F.P."/>
            <person name="Buerckstuemmer T."/>
            <person name="Bennett K.L."/>
            <person name="Superti-Furga G."/>
            <person name="Colinge J."/>
        </authorList>
    </citation>
    <scope>IDENTIFICATION BY MASS SPECTROMETRY [LARGE SCALE ANALYSIS]</scope>
</reference>
<reference key="8">
    <citation type="journal article" date="2011" name="Biochem. Biophys. Res. Commun.">
        <title>Alternative splicing variants of human arsenic (+3 oxidation state) methyltransferase.</title>
        <authorList>
            <person name="Sumi D."/>
            <person name="Fukushima K."/>
            <person name="Miyataka H."/>
            <person name="Himeno S."/>
        </authorList>
    </citation>
    <scope>ALTERNATIVE SPLICING</scope>
</reference>
<reference key="9">
    <citation type="journal article" date="2014" name="J. Proteomics">
        <title>An enzyme assisted RP-RPLC approach for in-depth analysis of human liver phosphoproteome.</title>
        <authorList>
            <person name="Bian Y."/>
            <person name="Song C."/>
            <person name="Cheng K."/>
            <person name="Dong M."/>
            <person name="Wang F."/>
            <person name="Huang J."/>
            <person name="Sun D."/>
            <person name="Wang L."/>
            <person name="Ye M."/>
            <person name="Zou H."/>
        </authorList>
    </citation>
    <scope>PHOSPHORYLATION [LARGE SCALE ANALYSIS] AT SER-335</scope>
    <scope>IDENTIFICATION BY MASS SPECTROMETRY [LARGE SCALE ANALYSIS]</scope>
    <source>
        <tissue>Liver</tissue>
    </source>
</reference>
<reference key="10">
    <citation type="journal article" date="2015" name="Toxicol. Sci.">
        <title>Interactive effects of N6AMT1 and As3MT in arsenic biomethylation.</title>
        <authorList>
            <person name="Zhang H."/>
            <person name="Ge Y."/>
            <person name="He P."/>
            <person name="Chen X."/>
            <person name="Carina A."/>
            <person name="Qiu Y."/>
            <person name="Aga D.S."/>
            <person name="Ren X."/>
        </authorList>
    </citation>
    <scope>FUNCTION</scope>
    <scope>CATALYTIC ACTIVITY</scope>
</reference>
<reference key="11">
    <citation type="journal article" date="2008" name="Pharmacogenet. Genomics">
        <title>High arsenic metabolic efficiency in AS3MT287Thr allele carriers.</title>
        <authorList>
            <person name="Hernandez A."/>
            <person name="Xamena N."/>
            <person name="Sekaran C."/>
            <person name="Tokunaga H."/>
            <person name="Sampayo-Reyes A."/>
            <person name="Quinteros D."/>
            <person name="Creus A."/>
            <person name="Marcos R."/>
        </authorList>
    </citation>
    <scope>VARIANT THR-287</scope>
</reference>
<proteinExistence type="evidence at protein level"/>
<organism>
    <name type="scientific">Homo sapiens</name>
    <name type="common">Human</name>
    <dbReference type="NCBI Taxonomy" id="9606"/>
    <lineage>
        <taxon>Eukaryota</taxon>
        <taxon>Metazoa</taxon>
        <taxon>Chordata</taxon>
        <taxon>Craniata</taxon>
        <taxon>Vertebrata</taxon>
        <taxon>Euteleostomi</taxon>
        <taxon>Mammalia</taxon>
        <taxon>Eutheria</taxon>
        <taxon>Euarchontoglires</taxon>
        <taxon>Primates</taxon>
        <taxon>Haplorrhini</taxon>
        <taxon>Catarrhini</taxon>
        <taxon>Hominidae</taxon>
        <taxon>Homo</taxon>
    </lineage>
</organism>
<gene>
    <name type="primary">AS3MT</name>
    <name type="synonym">CYT19</name>
</gene>
<accession>Q9HBK9</accession>
<accession>A6NP79</accession>
<accession>Q0VDK3</accession>
<accession>Q0VDK4</accession>
<accession>Q5PZ02</accession>
<feature type="chain" id="PRO_0000204447" description="Arsenite methyltransferase">
    <location>
        <begin position="1"/>
        <end position="375"/>
    </location>
</feature>
<feature type="modified residue" description="Phosphoserine" evidence="6">
    <location>
        <position position="335"/>
    </location>
</feature>
<feature type="splice variant" id="VSP_053494" description="In isoform 2." evidence="5">
    <location>
        <begin position="58"/>
        <end position="153"/>
    </location>
</feature>
<feature type="sequence variant" id="VAR_027392" description="Frequency in African-Americans 0.008; not detected in Caucasian-Americans; enzyme activity is 31% of wild-type; dbSNP:rs35232887." evidence="2">
    <original>R</original>
    <variation>W</variation>
    <location>
        <position position="173"/>
    </location>
</feature>
<feature type="sequence variant" id="VAR_027393" description="Frequency in African-Americans 0.108 and Caucasian-Americans 0.100; enzyme activity is 350% of wild-type; dbSNP:rs11191439." evidence="2 3">
    <original>M</original>
    <variation>T</variation>
    <location>
        <position position="287"/>
    </location>
</feature>
<feature type="sequence variant" id="VAR_027394" description="Frequency in Caucasian-Americans 0.008; not detected in African-Americans; dbSNP:rs34556438." evidence="2">
    <original>T</original>
    <variation>I</variation>
    <location>
        <position position="306"/>
    </location>
</feature>
<feature type="sequence conflict" description="In Ref. 6; AAI19638." evidence="5" ref="6">
    <original>Q</original>
    <variation>R</variation>
    <location>
        <position position="125"/>
    </location>
</feature>
<feature type="sequence conflict" description="In Ref. 2; AAG09731." evidence="5" ref="2">
    <original>I</original>
    <variation>F</variation>
    <location>
        <position position="132"/>
    </location>
</feature>
<feature type="sequence conflict" description="In Ref. 2; AAG09731." evidence="5" ref="2">
    <original>Y</original>
    <variation>N</variation>
    <location>
        <position position="135"/>
    </location>
</feature>
<feature type="sequence conflict" description="In Ref. 2; AAG09731." evidence="5" ref="2">
    <original>G</original>
    <variation>A</variation>
    <location>
        <position position="140"/>
    </location>
</feature>
<protein>
    <recommendedName>
        <fullName>Arsenite methyltransferase</fullName>
        <ecNumber evidence="2 4">2.1.1.137</ecNumber>
    </recommendedName>
    <alternativeName>
        <fullName>Methylarsonite methyltransferase</fullName>
    </alternativeName>
    <alternativeName>
        <fullName>S-adenosyl-L-methionine:arsenic(III) methyltransferase</fullName>
    </alternativeName>
</protein>
<name>AS3MT_HUMAN</name>